<proteinExistence type="inferred from homology"/>
<reference key="1">
    <citation type="submission" date="2007-08" db="EMBL/GenBank/DDBJ databases">
        <title>Complete sequence of Shewanella sediminis HAW-EB3.</title>
        <authorList>
            <consortium name="US DOE Joint Genome Institute"/>
            <person name="Copeland A."/>
            <person name="Lucas S."/>
            <person name="Lapidus A."/>
            <person name="Barry K."/>
            <person name="Glavina del Rio T."/>
            <person name="Dalin E."/>
            <person name="Tice H."/>
            <person name="Pitluck S."/>
            <person name="Chertkov O."/>
            <person name="Brettin T."/>
            <person name="Bruce D."/>
            <person name="Detter J.C."/>
            <person name="Han C."/>
            <person name="Schmutz J."/>
            <person name="Larimer F."/>
            <person name="Land M."/>
            <person name="Hauser L."/>
            <person name="Kyrpides N."/>
            <person name="Kim E."/>
            <person name="Zhao J.-S."/>
            <person name="Richardson P."/>
        </authorList>
    </citation>
    <scope>NUCLEOTIDE SEQUENCE [LARGE SCALE GENOMIC DNA]</scope>
    <source>
        <strain>HAW-EB3</strain>
    </source>
</reference>
<dbReference type="EMBL" id="CP000821">
    <property type="protein sequence ID" value="ABV37203.1"/>
    <property type="molecule type" value="Genomic_DNA"/>
</dbReference>
<dbReference type="RefSeq" id="WP_012142935.1">
    <property type="nucleotide sequence ID" value="NC_009831.1"/>
</dbReference>
<dbReference type="SMR" id="A8FWI0"/>
<dbReference type="STRING" id="425104.Ssed_2596"/>
<dbReference type="KEGG" id="sse:Ssed_2596"/>
<dbReference type="eggNOG" id="COG0776">
    <property type="taxonomic scope" value="Bacteria"/>
</dbReference>
<dbReference type="HOGENOM" id="CLU_105066_1_3_6"/>
<dbReference type="OrthoDB" id="9797747at2"/>
<dbReference type="Proteomes" id="UP000002015">
    <property type="component" value="Chromosome"/>
</dbReference>
<dbReference type="GO" id="GO:0005829">
    <property type="term" value="C:cytosol"/>
    <property type="evidence" value="ECO:0007669"/>
    <property type="project" value="TreeGrafter"/>
</dbReference>
<dbReference type="GO" id="GO:0003677">
    <property type="term" value="F:DNA binding"/>
    <property type="evidence" value="ECO:0007669"/>
    <property type="project" value="UniProtKB-UniRule"/>
</dbReference>
<dbReference type="GO" id="GO:0030527">
    <property type="term" value="F:structural constituent of chromatin"/>
    <property type="evidence" value="ECO:0007669"/>
    <property type="project" value="InterPro"/>
</dbReference>
<dbReference type="GO" id="GO:0006310">
    <property type="term" value="P:DNA recombination"/>
    <property type="evidence" value="ECO:0007669"/>
    <property type="project" value="UniProtKB-UniRule"/>
</dbReference>
<dbReference type="GO" id="GO:0009893">
    <property type="term" value="P:positive regulation of metabolic process"/>
    <property type="evidence" value="ECO:0007669"/>
    <property type="project" value="UniProtKB-ARBA"/>
</dbReference>
<dbReference type="GO" id="GO:0006355">
    <property type="term" value="P:regulation of DNA-templated transcription"/>
    <property type="evidence" value="ECO:0007669"/>
    <property type="project" value="UniProtKB-UniRule"/>
</dbReference>
<dbReference type="GO" id="GO:0006417">
    <property type="term" value="P:regulation of translation"/>
    <property type="evidence" value="ECO:0007669"/>
    <property type="project" value="UniProtKB-UniRule"/>
</dbReference>
<dbReference type="CDD" id="cd13835">
    <property type="entry name" value="IHF_A"/>
    <property type="match status" value="1"/>
</dbReference>
<dbReference type="FunFam" id="4.10.520.10:FF:000002">
    <property type="entry name" value="Integration host factor subunit alpha"/>
    <property type="match status" value="1"/>
</dbReference>
<dbReference type="Gene3D" id="4.10.520.10">
    <property type="entry name" value="IHF-like DNA-binding proteins"/>
    <property type="match status" value="1"/>
</dbReference>
<dbReference type="HAMAP" id="MF_00380">
    <property type="entry name" value="IHF_alpha"/>
    <property type="match status" value="1"/>
</dbReference>
<dbReference type="InterPro" id="IPR000119">
    <property type="entry name" value="Hist_DNA-bd"/>
</dbReference>
<dbReference type="InterPro" id="IPR020816">
    <property type="entry name" value="Histone-like_DNA-bd_CS"/>
</dbReference>
<dbReference type="InterPro" id="IPR010992">
    <property type="entry name" value="IHF-like_DNA-bd_dom_sf"/>
</dbReference>
<dbReference type="InterPro" id="IPR005684">
    <property type="entry name" value="IHF_alpha"/>
</dbReference>
<dbReference type="NCBIfam" id="TIGR00987">
    <property type="entry name" value="himA"/>
    <property type="match status" value="1"/>
</dbReference>
<dbReference type="NCBIfam" id="NF001401">
    <property type="entry name" value="PRK00285.1"/>
    <property type="match status" value="1"/>
</dbReference>
<dbReference type="PANTHER" id="PTHR33175">
    <property type="entry name" value="DNA-BINDING PROTEIN HU"/>
    <property type="match status" value="1"/>
</dbReference>
<dbReference type="PANTHER" id="PTHR33175:SF2">
    <property type="entry name" value="INTEGRATION HOST FACTOR SUBUNIT ALPHA"/>
    <property type="match status" value="1"/>
</dbReference>
<dbReference type="Pfam" id="PF00216">
    <property type="entry name" value="Bac_DNA_binding"/>
    <property type="match status" value="1"/>
</dbReference>
<dbReference type="PRINTS" id="PR01727">
    <property type="entry name" value="DNABINDINGHU"/>
</dbReference>
<dbReference type="SMART" id="SM00411">
    <property type="entry name" value="BHL"/>
    <property type="match status" value="1"/>
</dbReference>
<dbReference type="SUPFAM" id="SSF47729">
    <property type="entry name" value="IHF-like DNA-binding proteins"/>
    <property type="match status" value="1"/>
</dbReference>
<dbReference type="PROSITE" id="PS00045">
    <property type="entry name" value="HISTONE_LIKE"/>
    <property type="match status" value="1"/>
</dbReference>
<evidence type="ECO:0000255" key="1">
    <source>
        <dbReference type="HAMAP-Rule" id="MF_00380"/>
    </source>
</evidence>
<evidence type="ECO:0000256" key="2">
    <source>
        <dbReference type="SAM" id="MobiDB-lite"/>
    </source>
</evidence>
<gene>
    <name evidence="1" type="primary">ihfA</name>
    <name evidence="1" type="synonym">himA</name>
    <name type="ordered locus">Ssed_2596</name>
</gene>
<sequence length="98" mass="11147">MALTKAEMAEHLFETLGINKRVAKEMVETFFEEIRQALESGEQVKLSGFGNFDLRDKNQRPGRNPKTGEDIPISARRVVTFRPGQKLKSRVEEANAKK</sequence>
<keyword id="KW-0233">DNA recombination</keyword>
<keyword id="KW-0238">DNA-binding</keyword>
<keyword id="KW-1185">Reference proteome</keyword>
<keyword id="KW-0804">Transcription</keyword>
<keyword id="KW-0805">Transcription regulation</keyword>
<keyword id="KW-0810">Translation regulation</keyword>
<accession>A8FWI0</accession>
<protein>
    <recommendedName>
        <fullName evidence="1">Integration host factor subunit alpha</fullName>
        <shortName evidence="1">IHF-alpha</shortName>
    </recommendedName>
</protein>
<comment type="function">
    <text evidence="1">This protein is one of the two subunits of integration host factor, a specific DNA-binding protein that functions in genetic recombination as well as in transcriptional and translational control.</text>
</comment>
<comment type="subunit">
    <text evidence="1">Heterodimer of an alpha and a beta chain.</text>
</comment>
<comment type="similarity">
    <text evidence="1">Belongs to the bacterial histone-like protein family.</text>
</comment>
<organism>
    <name type="scientific">Shewanella sediminis (strain HAW-EB3)</name>
    <dbReference type="NCBI Taxonomy" id="425104"/>
    <lineage>
        <taxon>Bacteria</taxon>
        <taxon>Pseudomonadati</taxon>
        <taxon>Pseudomonadota</taxon>
        <taxon>Gammaproteobacteria</taxon>
        <taxon>Alteromonadales</taxon>
        <taxon>Shewanellaceae</taxon>
        <taxon>Shewanella</taxon>
    </lineage>
</organism>
<name>IHFA_SHESH</name>
<feature type="chain" id="PRO_1000080040" description="Integration host factor subunit alpha">
    <location>
        <begin position="1"/>
        <end position="98"/>
    </location>
</feature>
<feature type="region of interest" description="Disordered" evidence="2">
    <location>
        <begin position="49"/>
        <end position="71"/>
    </location>
</feature>